<accession>A4VNZ7</accession>
<gene>
    <name evidence="1" type="primary">pepA</name>
    <name type="ordered locus">PST_3058</name>
</gene>
<protein>
    <recommendedName>
        <fullName evidence="1">Probable cytosol aminopeptidase</fullName>
        <ecNumber evidence="1">3.4.11.1</ecNumber>
    </recommendedName>
    <alternativeName>
        <fullName evidence="1">Leucine aminopeptidase</fullName>
        <shortName evidence="1">LAP</shortName>
        <ecNumber evidence="1">3.4.11.10</ecNumber>
    </alternativeName>
    <alternativeName>
        <fullName evidence="1">Leucyl aminopeptidase</fullName>
    </alternativeName>
</protein>
<proteinExistence type="inferred from homology"/>
<comment type="function">
    <text evidence="1">Presumably involved in the processing and regular turnover of intracellular proteins. Catalyzes the removal of unsubstituted N-terminal amino acids from various peptides.</text>
</comment>
<comment type="catalytic activity">
    <reaction evidence="1">
        <text>Release of an N-terminal amino acid, Xaa-|-Yaa-, in which Xaa is preferably Leu, but may be other amino acids including Pro although not Arg or Lys, and Yaa may be Pro. Amino acid amides and methyl esters are also readily hydrolyzed, but rates on arylamides are exceedingly low.</text>
        <dbReference type="EC" id="3.4.11.1"/>
    </reaction>
</comment>
<comment type="catalytic activity">
    <reaction evidence="1">
        <text>Release of an N-terminal amino acid, preferentially leucine, but not glutamic or aspartic acids.</text>
        <dbReference type="EC" id="3.4.11.10"/>
    </reaction>
</comment>
<comment type="cofactor">
    <cofactor evidence="1">
        <name>Mn(2+)</name>
        <dbReference type="ChEBI" id="CHEBI:29035"/>
    </cofactor>
    <text evidence="1">Binds 2 manganese ions per subunit.</text>
</comment>
<comment type="subcellular location">
    <subcellularLocation>
        <location evidence="1">Cytoplasm</location>
    </subcellularLocation>
</comment>
<comment type="similarity">
    <text evidence="1">Belongs to the peptidase M17 family.</text>
</comment>
<keyword id="KW-0031">Aminopeptidase</keyword>
<keyword id="KW-0963">Cytoplasm</keyword>
<keyword id="KW-0378">Hydrolase</keyword>
<keyword id="KW-0464">Manganese</keyword>
<keyword id="KW-0479">Metal-binding</keyword>
<keyword id="KW-0645">Protease</keyword>
<keyword id="KW-1185">Reference proteome</keyword>
<organism>
    <name type="scientific">Stutzerimonas stutzeri (strain A1501)</name>
    <name type="common">Pseudomonas stutzeri</name>
    <dbReference type="NCBI Taxonomy" id="379731"/>
    <lineage>
        <taxon>Bacteria</taxon>
        <taxon>Pseudomonadati</taxon>
        <taxon>Pseudomonadota</taxon>
        <taxon>Gammaproteobacteria</taxon>
        <taxon>Pseudomonadales</taxon>
        <taxon>Pseudomonadaceae</taxon>
        <taxon>Stutzerimonas</taxon>
    </lineage>
</organism>
<sequence length="496" mass="52391">MEFVVKSAKASTQKTATLILPLGENCQLGSVAQSVDSASAGALSTALKRGDIQGKPGQTLLLHGLPGLKAERVLLVGTGKADELDSRQWRKVVNAALAVIKNLGGGDAAFAMQDVQVKGRDSYARTRLLVEIVADGQYVFDQFKSKKAEPRALQKIILLCDKAEQAGVERAAREASAIATGMAFTRDLGNLPPNVCHPTFLADQARQLSKAYKGVKLDVLDEKKLRELGAGAFLAVSQGSDQPGCIIVLQYNGGKKGDKPYALVGKGITFDTGGISLKPGLGMDEMKYDMGGGASVLGTLKAVLELQLPINLVCLLACAENMPSGGATRPGDIVTTMSGQTVEILNTDAEGRLVLCDTLTYAERFEPRAVVDVATLTGACIVALGSNTSGLLGNNDELIQQLLQAGESAADRAWQLPLFDEYQEQLDSPFADIANIGGPKAGTITAACFLSRFTKKYPWAHLDIAGTAWTSGGKEKGATGRPVPLLTQYLLDRING</sequence>
<evidence type="ECO:0000255" key="1">
    <source>
        <dbReference type="HAMAP-Rule" id="MF_00181"/>
    </source>
</evidence>
<dbReference type="EC" id="3.4.11.1" evidence="1"/>
<dbReference type="EC" id="3.4.11.10" evidence="1"/>
<dbReference type="EMBL" id="CP000304">
    <property type="protein sequence ID" value="ABP80698.1"/>
    <property type="molecule type" value="Genomic_DNA"/>
</dbReference>
<dbReference type="RefSeq" id="WP_011914151.1">
    <property type="nucleotide sequence ID" value="NC_009434.1"/>
</dbReference>
<dbReference type="SMR" id="A4VNZ7"/>
<dbReference type="KEGG" id="psa:PST_3058"/>
<dbReference type="eggNOG" id="COG0260">
    <property type="taxonomic scope" value="Bacteria"/>
</dbReference>
<dbReference type="HOGENOM" id="CLU_013734_2_2_6"/>
<dbReference type="Proteomes" id="UP000000233">
    <property type="component" value="Chromosome"/>
</dbReference>
<dbReference type="GO" id="GO:0005737">
    <property type="term" value="C:cytoplasm"/>
    <property type="evidence" value="ECO:0007669"/>
    <property type="project" value="UniProtKB-SubCell"/>
</dbReference>
<dbReference type="GO" id="GO:0030145">
    <property type="term" value="F:manganese ion binding"/>
    <property type="evidence" value="ECO:0007669"/>
    <property type="project" value="UniProtKB-UniRule"/>
</dbReference>
<dbReference type="GO" id="GO:0070006">
    <property type="term" value="F:metalloaminopeptidase activity"/>
    <property type="evidence" value="ECO:0007669"/>
    <property type="project" value="InterPro"/>
</dbReference>
<dbReference type="GO" id="GO:0006508">
    <property type="term" value="P:proteolysis"/>
    <property type="evidence" value="ECO:0007669"/>
    <property type="project" value="UniProtKB-KW"/>
</dbReference>
<dbReference type="CDD" id="cd00433">
    <property type="entry name" value="Peptidase_M17"/>
    <property type="match status" value="1"/>
</dbReference>
<dbReference type="FunFam" id="3.40.630.10:FF:000004">
    <property type="entry name" value="Probable cytosol aminopeptidase"/>
    <property type="match status" value="1"/>
</dbReference>
<dbReference type="Gene3D" id="3.40.220.10">
    <property type="entry name" value="Leucine Aminopeptidase, subunit E, domain 1"/>
    <property type="match status" value="1"/>
</dbReference>
<dbReference type="Gene3D" id="3.40.630.10">
    <property type="entry name" value="Zn peptidases"/>
    <property type="match status" value="1"/>
</dbReference>
<dbReference type="HAMAP" id="MF_00181">
    <property type="entry name" value="Cytosol_peptidase_M17"/>
    <property type="match status" value="1"/>
</dbReference>
<dbReference type="InterPro" id="IPR011356">
    <property type="entry name" value="Leucine_aapep/pepB"/>
</dbReference>
<dbReference type="InterPro" id="IPR043472">
    <property type="entry name" value="Macro_dom-like"/>
</dbReference>
<dbReference type="InterPro" id="IPR000819">
    <property type="entry name" value="Peptidase_M17_C"/>
</dbReference>
<dbReference type="InterPro" id="IPR023042">
    <property type="entry name" value="Peptidase_M17_leu_NH2_pept"/>
</dbReference>
<dbReference type="InterPro" id="IPR008283">
    <property type="entry name" value="Peptidase_M17_N"/>
</dbReference>
<dbReference type="NCBIfam" id="NF002073">
    <property type="entry name" value="PRK00913.1-2"/>
    <property type="match status" value="1"/>
</dbReference>
<dbReference type="NCBIfam" id="NF002074">
    <property type="entry name" value="PRK00913.1-4"/>
    <property type="match status" value="1"/>
</dbReference>
<dbReference type="NCBIfam" id="NF002077">
    <property type="entry name" value="PRK00913.2-4"/>
    <property type="match status" value="1"/>
</dbReference>
<dbReference type="PANTHER" id="PTHR11963:SF23">
    <property type="entry name" value="CYTOSOL AMINOPEPTIDASE"/>
    <property type="match status" value="1"/>
</dbReference>
<dbReference type="PANTHER" id="PTHR11963">
    <property type="entry name" value="LEUCINE AMINOPEPTIDASE-RELATED"/>
    <property type="match status" value="1"/>
</dbReference>
<dbReference type="Pfam" id="PF00883">
    <property type="entry name" value="Peptidase_M17"/>
    <property type="match status" value="1"/>
</dbReference>
<dbReference type="Pfam" id="PF02789">
    <property type="entry name" value="Peptidase_M17_N"/>
    <property type="match status" value="1"/>
</dbReference>
<dbReference type="PRINTS" id="PR00481">
    <property type="entry name" value="LAMNOPPTDASE"/>
</dbReference>
<dbReference type="SUPFAM" id="SSF52949">
    <property type="entry name" value="Macro domain-like"/>
    <property type="match status" value="1"/>
</dbReference>
<dbReference type="SUPFAM" id="SSF53187">
    <property type="entry name" value="Zn-dependent exopeptidases"/>
    <property type="match status" value="1"/>
</dbReference>
<dbReference type="PROSITE" id="PS00631">
    <property type="entry name" value="CYTOSOL_AP"/>
    <property type="match status" value="1"/>
</dbReference>
<name>AMPA_STUS1</name>
<reference key="1">
    <citation type="journal article" date="2008" name="Proc. Natl. Acad. Sci. U.S.A.">
        <title>Nitrogen fixation island and rhizosphere competence traits in the genome of root-associated Pseudomonas stutzeri A1501.</title>
        <authorList>
            <person name="Yan Y."/>
            <person name="Yang J."/>
            <person name="Dou Y."/>
            <person name="Chen M."/>
            <person name="Ping S."/>
            <person name="Peng J."/>
            <person name="Lu W."/>
            <person name="Zhang W."/>
            <person name="Yao Z."/>
            <person name="Li H."/>
            <person name="Liu W."/>
            <person name="He S."/>
            <person name="Geng L."/>
            <person name="Zhang X."/>
            <person name="Yang F."/>
            <person name="Yu H."/>
            <person name="Zhan Y."/>
            <person name="Li D."/>
            <person name="Lin Z."/>
            <person name="Wang Y."/>
            <person name="Elmerich C."/>
            <person name="Lin M."/>
            <person name="Jin Q."/>
        </authorList>
    </citation>
    <scope>NUCLEOTIDE SEQUENCE [LARGE SCALE GENOMIC DNA]</scope>
    <source>
        <strain>A1501</strain>
    </source>
</reference>
<feature type="chain" id="PRO_1000019960" description="Probable cytosol aminopeptidase">
    <location>
        <begin position="1"/>
        <end position="496"/>
    </location>
</feature>
<feature type="active site" evidence="1">
    <location>
        <position position="278"/>
    </location>
</feature>
<feature type="active site" evidence="1">
    <location>
        <position position="352"/>
    </location>
</feature>
<feature type="binding site" evidence="1">
    <location>
        <position position="266"/>
    </location>
    <ligand>
        <name>Mn(2+)</name>
        <dbReference type="ChEBI" id="CHEBI:29035"/>
        <label>2</label>
    </ligand>
</feature>
<feature type="binding site" evidence="1">
    <location>
        <position position="271"/>
    </location>
    <ligand>
        <name>Mn(2+)</name>
        <dbReference type="ChEBI" id="CHEBI:29035"/>
        <label>1</label>
    </ligand>
</feature>
<feature type="binding site" evidence="1">
    <location>
        <position position="271"/>
    </location>
    <ligand>
        <name>Mn(2+)</name>
        <dbReference type="ChEBI" id="CHEBI:29035"/>
        <label>2</label>
    </ligand>
</feature>
<feature type="binding site" evidence="1">
    <location>
        <position position="289"/>
    </location>
    <ligand>
        <name>Mn(2+)</name>
        <dbReference type="ChEBI" id="CHEBI:29035"/>
        <label>2</label>
    </ligand>
</feature>
<feature type="binding site" evidence="1">
    <location>
        <position position="348"/>
    </location>
    <ligand>
        <name>Mn(2+)</name>
        <dbReference type="ChEBI" id="CHEBI:29035"/>
        <label>1</label>
    </ligand>
</feature>
<feature type="binding site" evidence="1">
    <location>
        <position position="350"/>
    </location>
    <ligand>
        <name>Mn(2+)</name>
        <dbReference type="ChEBI" id="CHEBI:29035"/>
        <label>1</label>
    </ligand>
</feature>
<feature type="binding site" evidence="1">
    <location>
        <position position="350"/>
    </location>
    <ligand>
        <name>Mn(2+)</name>
        <dbReference type="ChEBI" id="CHEBI:29035"/>
        <label>2</label>
    </ligand>
</feature>